<gene>
    <name type="ordered locus">At5g43440</name>
    <name type="ORF">MWF20.15</name>
</gene>
<protein>
    <recommendedName>
        <fullName>1-aminocyclopropane-1-carboxylate oxidase homolog 9</fullName>
        <ecNumber>1.14.-.-</ecNumber>
    </recommendedName>
</protein>
<sequence length="365" mass="40860">MTEKSAELVRLNELKAFVSTKAGVKGLVDTKITEVPRIFHIPSSSTLSNNKPSDIFGLNLTVPIIDLGDGNTSAARNVLVSKIKEAAENWGFFQVINHGIPLTVLKDIKQGVRRFHEEDPEVKKQYFATDFNTRFAYNTNFDIHYSSPMNWKDSFTCYTCPQDPLKPEEIPLACRDVVIEYSKHVMELGGLLFQLLSEALGLDSEILKNMDCLKGLLMLCHYYPPCPQPDLTLGISKHTDNSFITILLQDQIGGLQVLHQDSWVDVTPVPGALVISIGDFMQLITNDKFLSMEHRVRANRDGPRISVACFVSSGVFPNSTVYGPIKELLSDENPAKYRDITIPEYTVGYLASIFDGKSHLSKFRI</sequence>
<reference key="1">
    <citation type="journal article" date="2000" name="DNA Res.">
        <title>Structural analysis of Arabidopsis thaliana chromosome 5. X. Sequence features of the regions of 3,076,755 bp covered by sixty P1 and TAC clones.</title>
        <authorList>
            <person name="Sato S."/>
            <person name="Nakamura Y."/>
            <person name="Kaneko T."/>
            <person name="Katoh T."/>
            <person name="Asamizu E."/>
            <person name="Kotani H."/>
            <person name="Tabata S."/>
        </authorList>
    </citation>
    <scope>NUCLEOTIDE SEQUENCE [LARGE SCALE GENOMIC DNA]</scope>
    <source>
        <strain>cv. Columbia</strain>
    </source>
</reference>
<reference key="2">
    <citation type="journal article" date="2017" name="Plant J.">
        <title>Araport11: a complete reannotation of the Arabidopsis thaliana reference genome.</title>
        <authorList>
            <person name="Cheng C.Y."/>
            <person name="Krishnakumar V."/>
            <person name="Chan A.P."/>
            <person name="Thibaud-Nissen F."/>
            <person name="Schobel S."/>
            <person name="Town C.D."/>
        </authorList>
    </citation>
    <scope>GENOME REANNOTATION</scope>
    <source>
        <strain>cv. Columbia</strain>
    </source>
</reference>
<reference key="3">
    <citation type="journal article" date="2003" name="Science">
        <title>Empirical analysis of transcriptional activity in the Arabidopsis genome.</title>
        <authorList>
            <person name="Yamada K."/>
            <person name="Lim J."/>
            <person name="Dale J.M."/>
            <person name="Chen H."/>
            <person name="Shinn P."/>
            <person name="Palm C.J."/>
            <person name="Southwick A.M."/>
            <person name="Wu H.C."/>
            <person name="Kim C.J."/>
            <person name="Nguyen M."/>
            <person name="Pham P.K."/>
            <person name="Cheuk R.F."/>
            <person name="Karlin-Newmann G."/>
            <person name="Liu S.X."/>
            <person name="Lam B."/>
            <person name="Sakano H."/>
            <person name="Wu T."/>
            <person name="Yu G."/>
            <person name="Miranda M."/>
            <person name="Quach H.L."/>
            <person name="Tripp M."/>
            <person name="Chang C.H."/>
            <person name="Lee J.M."/>
            <person name="Toriumi M.J."/>
            <person name="Chan M.M."/>
            <person name="Tang C.C."/>
            <person name="Onodera C.S."/>
            <person name="Deng J.M."/>
            <person name="Akiyama K."/>
            <person name="Ansari Y."/>
            <person name="Arakawa T."/>
            <person name="Banh J."/>
            <person name="Banno F."/>
            <person name="Bowser L."/>
            <person name="Brooks S.Y."/>
            <person name="Carninci P."/>
            <person name="Chao Q."/>
            <person name="Choy N."/>
            <person name="Enju A."/>
            <person name="Goldsmith A.D."/>
            <person name="Gurjal M."/>
            <person name="Hansen N.F."/>
            <person name="Hayashizaki Y."/>
            <person name="Johnson-Hopson C."/>
            <person name="Hsuan V.W."/>
            <person name="Iida K."/>
            <person name="Karnes M."/>
            <person name="Khan S."/>
            <person name="Koesema E."/>
            <person name="Ishida J."/>
            <person name="Jiang P.X."/>
            <person name="Jones T."/>
            <person name="Kawai J."/>
            <person name="Kamiya A."/>
            <person name="Meyers C."/>
            <person name="Nakajima M."/>
            <person name="Narusaka M."/>
            <person name="Seki M."/>
            <person name="Sakurai T."/>
            <person name="Satou M."/>
            <person name="Tamse R."/>
            <person name="Vaysberg M."/>
            <person name="Wallender E.K."/>
            <person name="Wong C."/>
            <person name="Yamamura Y."/>
            <person name="Yuan S."/>
            <person name="Shinozaki K."/>
            <person name="Davis R.W."/>
            <person name="Theologis A."/>
            <person name="Ecker J.R."/>
        </authorList>
    </citation>
    <scope>NUCLEOTIDE SEQUENCE [LARGE SCALE MRNA] (ISOFORM 1)</scope>
    <source>
        <strain>cv. Columbia</strain>
    </source>
</reference>
<reference key="4">
    <citation type="submission" date="2006-11" db="EMBL/GenBank/DDBJ databases">
        <title>Large-scale analysis of RIKEN Arabidopsis full-length (RAFL) cDNAs.</title>
        <authorList>
            <person name="Totoki Y."/>
            <person name="Seki M."/>
            <person name="Ishida J."/>
            <person name="Nakajima M."/>
            <person name="Enju A."/>
            <person name="Kamiya A."/>
            <person name="Narusaka M."/>
            <person name="Shin-i T."/>
            <person name="Nakagawa M."/>
            <person name="Sakamoto N."/>
            <person name="Oishi K."/>
            <person name="Kohara Y."/>
            <person name="Kobayashi M."/>
            <person name="Toyoda A."/>
            <person name="Sakaki Y."/>
            <person name="Sakurai T."/>
            <person name="Iida K."/>
            <person name="Akiyama K."/>
            <person name="Satou M."/>
            <person name="Toyoda T."/>
            <person name="Konagaya A."/>
            <person name="Carninci P."/>
            <person name="Kawai J."/>
            <person name="Hayashizaki Y."/>
            <person name="Shinozaki K."/>
        </authorList>
    </citation>
    <scope>NUCLEOTIDE SEQUENCE [LARGE SCALE MRNA] (ISOFORM 2)</scope>
    <source>
        <strain>cv. Columbia</strain>
    </source>
</reference>
<evidence type="ECO:0000255" key="1">
    <source>
        <dbReference type="PROSITE-ProRule" id="PRU00805"/>
    </source>
</evidence>
<evidence type="ECO:0000303" key="2">
    <source ref="4"/>
</evidence>
<evidence type="ECO:0000305" key="3"/>
<accession>Q9LSW7</accession>
<accession>Q0WVA2</accession>
<organism>
    <name type="scientific">Arabidopsis thaliana</name>
    <name type="common">Mouse-ear cress</name>
    <dbReference type="NCBI Taxonomy" id="3702"/>
    <lineage>
        <taxon>Eukaryota</taxon>
        <taxon>Viridiplantae</taxon>
        <taxon>Streptophyta</taxon>
        <taxon>Embryophyta</taxon>
        <taxon>Tracheophyta</taxon>
        <taxon>Spermatophyta</taxon>
        <taxon>Magnoliopsida</taxon>
        <taxon>eudicotyledons</taxon>
        <taxon>Gunneridae</taxon>
        <taxon>Pentapetalae</taxon>
        <taxon>rosids</taxon>
        <taxon>malvids</taxon>
        <taxon>Brassicales</taxon>
        <taxon>Brassicaceae</taxon>
        <taxon>Camelineae</taxon>
        <taxon>Arabidopsis</taxon>
    </lineage>
</organism>
<comment type="cofactor">
    <cofactor evidence="1">
        <name>Fe(2+)</name>
        <dbReference type="ChEBI" id="CHEBI:29033"/>
    </cofactor>
    <text evidence="1">Binds 1 Fe(2+) ion per subunit.</text>
</comment>
<comment type="alternative products">
    <event type="alternative splicing"/>
    <isoform>
        <id>Q9LSW7-1</id>
        <name>1</name>
        <sequence type="displayed"/>
    </isoform>
    <isoform>
        <id>Q9LSW7-2</id>
        <name>2</name>
        <sequence type="described" ref="VSP_041040 VSP_041041"/>
    </isoform>
</comment>
<comment type="similarity">
    <text evidence="3">Belongs to the iron/ascorbate-dependent oxidoreductase family.</text>
</comment>
<feature type="chain" id="PRO_0000408284" description="1-aminocyclopropane-1-carboxylate oxidase homolog 9">
    <location>
        <begin position="1"/>
        <end position="365"/>
    </location>
</feature>
<feature type="domain" description="Fe2OG dioxygenase" evidence="1">
    <location>
        <begin position="214"/>
        <end position="313"/>
    </location>
</feature>
<feature type="binding site" evidence="1">
    <location>
        <position position="238"/>
    </location>
    <ligand>
        <name>Fe cation</name>
        <dbReference type="ChEBI" id="CHEBI:24875"/>
    </ligand>
</feature>
<feature type="binding site" evidence="1">
    <location>
        <position position="240"/>
    </location>
    <ligand>
        <name>Fe cation</name>
        <dbReference type="ChEBI" id="CHEBI:24875"/>
    </ligand>
</feature>
<feature type="binding site" evidence="1">
    <location>
        <position position="294"/>
    </location>
    <ligand>
        <name>Fe cation</name>
        <dbReference type="ChEBI" id="CHEBI:24875"/>
    </ligand>
</feature>
<feature type="binding site" evidence="1">
    <location>
        <position position="304"/>
    </location>
    <ligand>
        <name>2-oxoglutarate</name>
        <dbReference type="ChEBI" id="CHEBI:16810"/>
    </ligand>
</feature>
<feature type="splice variant" id="VSP_041040" description="In isoform 2." evidence="2">
    <original>LITNDKFL</original>
    <variation>ASSIDASF</variation>
    <location>
        <begin position="283"/>
        <end position="290"/>
    </location>
</feature>
<feature type="splice variant" id="VSP_041041" description="In isoform 2." evidence="2">
    <location>
        <begin position="291"/>
        <end position="365"/>
    </location>
</feature>
<proteinExistence type="evidence at transcript level"/>
<name>ACCH9_ARATH</name>
<dbReference type="EC" id="1.14.-.-"/>
<dbReference type="EMBL" id="AB025638">
    <property type="protein sequence ID" value="BAA97423.1"/>
    <property type="molecule type" value="Genomic_DNA"/>
</dbReference>
<dbReference type="EMBL" id="CP002688">
    <property type="protein sequence ID" value="AED94963.1"/>
    <property type="molecule type" value="Genomic_DNA"/>
</dbReference>
<dbReference type="EMBL" id="CP002688">
    <property type="protein sequence ID" value="AED94964.1"/>
    <property type="molecule type" value="Genomic_DNA"/>
</dbReference>
<dbReference type="EMBL" id="AY056810">
    <property type="protein sequence ID" value="AAL10501.1"/>
    <property type="molecule type" value="mRNA"/>
</dbReference>
<dbReference type="EMBL" id="AY143873">
    <property type="protein sequence ID" value="AAN28812.1"/>
    <property type="molecule type" value="mRNA"/>
</dbReference>
<dbReference type="EMBL" id="AK226856">
    <property type="protein sequence ID" value="BAE98946.1"/>
    <property type="molecule type" value="mRNA"/>
</dbReference>
<dbReference type="RefSeq" id="NP_001078700.1">
    <molecule id="Q9LSW7-2"/>
    <property type="nucleotide sequence ID" value="NM_001085231.2"/>
</dbReference>
<dbReference type="RefSeq" id="NP_199157.1">
    <molecule id="Q9LSW7-1"/>
    <property type="nucleotide sequence ID" value="NM_123710.2"/>
</dbReference>
<dbReference type="SMR" id="Q9LSW7"/>
<dbReference type="FunCoup" id="Q9LSW7">
    <property type="interactions" value="22"/>
</dbReference>
<dbReference type="STRING" id="3702.Q9LSW7"/>
<dbReference type="PaxDb" id="3702-AT5G43440.1"/>
<dbReference type="ProteomicsDB" id="244515">
    <molecule id="Q9LSW7-1"/>
</dbReference>
<dbReference type="EnsemblPlants" id="AT5G43440.1">
    <molecule id="Q9LSW7-1"/>
    <property type="protein sequence ID" value="AT5G43440.1"/>
    <property type="gene ID" value="AT5G43440"/>
</dbReference>
<dbReference type="EnsemblPlants" id="AT5G43440.2">
    <molecule id="Q9LSW7-2"/>
    <property type="protein sequence ID" value="AT5G43440.2"/>
    <property type="gene ID" value="AT5G43440"/>
</dbReference>
<dbReference type="GeneID" id="834364"/>
<dbReference type="Gramene" id="AT5G43440.1">
    <molecule id="Q9LSW7-1"/>
    <property type="protein sequence ID" value="AT5G43440.1"/>
    <property type="gene ID" value="AT5G43440"/>
</dbReference>
<dbReference type="Gramene" id="AT5G43440.2">
    <molecule id="Q9LSW7-2"/>
    <property type="protein sequence ID" value="AT5G43440.2"/>
    <property type="gene ID" value="AT5G43440"/>
</dbReference>
<dbReference type="KEGG" id="ath:AT5G43440"/>
<dbReference type="Araport" id="AT5G43440"/>
<dbReference type="TAIR" id="AT5G43440"/>
<dbReference type="eggNOG" id="KOG0143">
    <property type="taxonomic scope" value="Eukaryota"/>
</dbReference>
<dbReference type="HOGENOM" id="CLU_010119_0_0_1"/>
<dbReference type="InParanoid" id="Q9LSW7"/>
<dbReference type="OMA" id="KQYFSRD"/>
<dbReference type="PhylomeDB" id="Q9LSW7"/>
<dbReference type="BioCyc" id="ARA:AT5G43440-MONOMER"/>
<dbReference type="PRO" id="PR:Q9LSW7"/>
<dbReference type="Proteomes" id="UP000006548">
    <property type="component" value="Chromosome 5"/>
</dbReference>
<dbReference type="ExpressionAtlas" id="Q9LSW7">
    <property type="expression patterns" value="baseline and differential"/>
</dbReference>
<dbReference type="GO" id="GO:0009815">
    <property type="term" value="F:1-aminocyclopropane-1-carboxylate oxidase activity"/>
    <property type="evidence" value="ECO:0000250"/>
    <property type="project" value="TAIR"/>
</dbReference>
<dbReference type="GO" id="GO:0051213">
    <property type="term" value="F:dioxygenase activity"/>
    <property type="evidence" value="ECO:0007669"/>
    <property type="project" value="UniProtKB-ARBA"/>
</dbReference>
<dbReference type="GO" id="GO:0046872">
    <property type="term" value="F:metal ion binding"/>
    <property type="evidence" value="ECO:0007669"/>
    <property type="project" value="UniProtKB-KW"/>
</dbReference>
<dbReference type="GO" id="GO:0009058">
    <property type="term" value="P:biosynthetic process"/>
    <property type="evidence" value="ECO:0007669"/>
    <property type="project" value="UniProtKB-ARBA"/>
</dbReference>
<dbReference type="FunFam" id="2.60.120.330:FF:000005">
    <property type="entry name" value="1-aminocyclopropane-1-carboxylate oxidase homolog 1"/>
    <property type="match status" value="1"/>
</dbReference>
<dbReference type="Gene3D" id="2.60.120.330">
    <property type="entry name" value="B-lactam Antibiotic, Isopenicillin N Synthase, Chain"/>
    <property type="match status" value="1"/>
</dbReference>
<dbReference type="InterPro" id="IPR026992">
    <property type="entry name" value="DIOX_N"/>
</dbReference>
<dbReference type="InterPro" id="IPR044861">
    <property type="entry name" value="IPNS-like_FE2OG_OXY"/>
</dbReference>
<dbReference type="InterPro" id="IPR027443">
    <property type="entry name" value="IPNS-like_sf"/>
</dbReference>
<dbReference type="InterPro" id="IPR005123">
    <property type="entry name" value="Oxoglu/Fe-dep_dioxygenase_dom"/>
</dbReference>
<dbReference type="PANTHER" id="PTHR10209:SF473">
    <property type="entry name" value="1-AMINOCYCLOPROPANE-1-CARBOXYLATE OXIDASE HOMOLOG 10-RELATED"/>
    <property type="match status" value="1"/>
</dbReference>
<dbReference type="PANTHER" id="PTHR10209">
    <property type="entry name" value="OXIDOREDUCTASE, 2OG-FE II OXYGENASE FAMILY PROTEIN"/>
    <property type="match status" value="1"/>
</dbReference>
<dbReference type="Pfam" id="PF03171">
    <property type="entry name" value="2OG-FeII_Oxy"/>
    <property type="match status" value="1"/>
</dbReference>
<dbReference type="Pfam" id="PF14226">
    <property type="entry name" value="DIOX_N"/>
    <property type="match status" value="1"/>
</dbReference>
<dbReference type="SUPFAM" id="SSF51197">
    <property type="entry name" value="Clavaminate synthase-like"/>
    <property type="match status" value="1"/>
</dbReference>
<dbReference type="PROSITE" id="PS51471">
    <property type="entry name" value="FE2OG_OXY"/>
    <property type="match status" value="1"/>
</dbReference>
<keyword id="KW-0025">Alternative splicing</keyword>
<keyword id="KW-0408">Iron</keyword>
<keyword id="KW-0479">Metal-binding</keyword>
<keyword id="KW-0560">Oxidoreductase</keyword>
<keyword id="KW-1185">Reference proteome</keyword>